<name>NUDC_MYCBT</name>
<keyword id="KW-0378">Hydrolase</keyword>
<keyword id="KW-0460">Magnesium</keyword>
<keyword id="KW-0464">Manganese</keyword>
<keyword id="KW-0479">Metal-binding</keyword>
<keyword id="KW-0520">NAD</keyword>
<accession>C1AGW8</accession>
<comment type="function">
    <text evidence="1">mRNA decapping enzyme that specifically removes the nicotinamide adenine dinucleotide (NAD) cap from a subset of mRNAs by hydrolyzing the diphosphate linkage to produce nicotinamide mononucleotide (NMN) and 5' monophosphate mRNA. The NAD-cap is present at the 5'-end of some mRNAs and stabilizes RNA against 5'-processing. Has preference for mRNAs with a 5'-end purine. Catalyzes the hydrolysis of a broad range of dinucleotide pyrophosphates.</text>
</comment>
<comment type="catalytic activity">
    <reaction evidence="1">
        <text>a 5'-end NAD(+)-phospho-ribonucleoside in mRNA + H2O = a 5'-end phospho-adenosine-phospho-ribonucleoside in mRNA + beta-nicotinamide D-ribonucleotide + 2 H(+)</text>
        <dbReference type="Rhea" id="RHEA:60876"/>
        <dbReference type="Rhea" id="RHEA-COMP:15698"/>
        <dbReference type="Rhea" id="RHEA-COMP:15719"/>
        <dbReference type="ChEBI" id="CHEBI:14649"/>
        <dbReference type="ChEBI" id="CHEBI:15377"/>
        <dbReference type="ChEBI" id="CHEBI:15378"/>
        <dbReference type="ChEBI" id="CHEBI:144029"/>
        <dbReference type="ChEBI" id="CHEBI:144051"/>
    </reaction>
    <physiologicalReaction direction="left-to-right" evidence="1">
        <dbReference type="Rhea" id="RHEA:60877"/>
    </physiologicalReaction>
</comment>
<comment type="catalytic activity">
    <reaction evidence="1">
        <text>NAD(+) + H2O = beta-nicotinamide D-ribonucleotide + AMP + 2 H(+)</text>
        <dbReference type="Rhea" id="RHEA:11800"/>
        <dbReference type="ChEBI" id="CHEBI:14649"/>
        <dbReference type="ChEBI" id="CHEBI:15377"/>
        <dbReference type="ChEBI" id="CHEBI:15378"/>
        <dbReference type="ChEBI" id="CHEBI:57540"/>
        <dbReference type="ChEBI" id="CHEBI:456215"/>
        <dbReference type="EC" id="3.6.1.22"/>
    </reaction>
</comment>
<comment type="catalytic activity">
    <reaction evidence="1">
        <text>NADH + H2O = reduced beta-nicotinamide D-ribonucleotide + AMP + 2 H(+)</text>
        <dbReference type="Rhea" id="RHEA:48868"/>
        <dbReference type="ChEBI" id="CHEBI:15377"/>
        <dbReference type="ChEBI" id="CHEBI:15378"/>
        <dbReference type="ChEBI" id="CHEBI:57945"/>
        <dbReference type="ChEBI" id="CHEBI:90832"/>
        <dbReference type="ChEBI" id="CHEBI:456215"/>
        <dbReference type="EC" id="3.6.1.22"/>
    </reaction>
</comment>
<comment type="cofactor">
    <cofactor evidence="1">
        <name>Mg(2+)</name>
        <dbReference type="ChEBI" id="CHEBI:18420"/>
    </cofactor>
    <cofactor evidence="1">
        <name>Mn(2+)</name>
        <dbReference type="ChEBI" id="CHEBI:29035"/>
    </cofactor>
    <text evidence="1">Divalent metal cations. Mg(2+) or Mn(2+).</text>
</comment>
<comment type="subunit">
    <text evidence="1">Homodimer.</text>
</comment>
<comment type="similarity">
    <text evidence="1">Belongs to the Nudix hydrolase family. NudC subfamily.</text>
</comment>
<reference key="1">
    <citation type="journal article" date="2009" name="Vaccine">
        <title>Whole genome sequence analysis of Mycobacterium bovis bacillus Calmette-Guerin (BCG) Tokyo 172: a comparative study of BCG vaccine substrains.</title>
        <authorList>
            <person name="Seki M."/>
            <person name="Honda I."/>
            <person name="Fujita I."/>
            <person name="Yano I."/>
            <person name="Yamamoto S."/>
            <person name="Koyama A."/>
        </authorList>
    </citation>
    <scope>NUCLEOTIDE SEQUENCE [LARGE SCALE GENOMIC DNA]</scope>
    <source>
        <strain>BCG / Tokyo 172 / ATCC 35737 / TMC 1019</strain>
    </source>
</reference>
<feature type="chain" id="PRO_1000191835" description="NAD-capped RNA hydrolase NudC">
    <location>
        <begin position="1"/>
        <end position="313"/>
    </location>
</feature>
<feature type="domain" description="Nudix hydrolase" evidence="1">
    <location>
        <begin position="168"/>
        <end position="293"/>
    </location>
</feature>
<feature type="short sequence motif" description="Nudix box" evidence="1">
    <location>
        <begin position="203"/>
        <end position="224"/>
    </location>
</feature>
<feature type="binding site" evidence="1">
    <location>
        <position position="111"/>
    </location>
    <ligand>
        <name>substrate</name>
    </ligand>
</feature>
<feature type="binding site" evidence="1">
    <location>
        <position position="202"/>
    </location>
    <ligand>
        <name>a divalent metal cation</name>
        <dbReference type="ChEBI" id="CHEBI:60240"/>
        <label>1</label>
    </ligand>
</feature>
<feature type="binding site" evidence="1">
    <location>
        <position position="218"/>
    </location>
    <ligand>
        <name>a divalent metal cation</name>
        <dbReference type="ChEBI" id="CHEBI:60240"/>
        <label>2</label>
    </ligand>
</feature>
<feature type="binding site" evidence="1">
    <location>
        <position position="218"/>
    </location>
    <ligand>
        <name>a divalent metal cation</name>
        <dbReference type="ChEBI" id="CHEBI:60240"/>
        <label>3</label>
    </ligand>
</feature>
<feature type="binding site" evidence="1">
    <location>
        <position position="222"/>
    </location>
    <ligand>
        <name>a divalent metal cation</name>
        <dbReference type="ChEBI" id="CHEBI:60240"/>
        <label>1</label>
    </ligand>
</feature>
<feature type="binding site" evidence="1">
    <location>
        <position position="222"/>
    </location>
    <ligand>
        <name>a divalent metal cation</name>
        <dbReference type="ChEBI" id="CHEBI:60240"/>
        <label>3</label>
    </ligand>
</feature>
<feature type="binding site" evidence="1">
    <location>
        <begin position="236"/>
        <end position="243"/>
    </location>
    <ligand>
        <name>substrate</name>
    </ligand>
</feature>
<feature type="binding site" evidence="1">
    <location>
        <position position="264"/>
    </location>
    <ligand>
        <name>a divalent metal cation</name>
        <dbReference type="ChEBI" id="CHEBI:60240"/>
        <label>1</label>
    </ligand>
</feature>
<feature type="binding site" evidence="1">
    <location>
        <position position="264"/>
    </location>
    <ligand>
        <name>a divalent metal cation</name>
        <dbReference type="ChEBI" id="CHEBI:60240"/>
        <label>3</label>
    </ligand>
</feature>
<organism>
    <name type="scientific">Mycobacterium bovis (strain BCG / Tokyo 172 / ATCC 35737 / TMC 1019)</name>
    <dbReference type="NCBI Taxonomy" id="561275"/>
    <lineage>
        <taxon>Bacteria</taxon>
        <taxon>Bacillati</taxon>
        <taxon>Actinomycetota</taxon>
        <taxon>Actinomycetes</taxon>
        <taxon>Mycobacteriales</taxon>
        <taxon>Mycobacteriaceae</taxon>
        <taxon>Mycobacterium</taxon>
        <taxon>Mycobacterium tuberculosis complex</taxon>
    </lineage>
</organism>
<gene>
    <name evidence="1" type="primary">nudC</name>
    <name type="ordered locus">JTY_3219</name>
</gene>
<dbReference type="EC" id="3.6.1.-" evidence="1"/>
<dbReference type="EC" id="3.6.1.22" evidence="1"/>
<dbReference type="EMBL" id="AP010918">
    <property type="protein sequence ID" value="BAH27497.1"/>
    <property type="molecule type" value="Genomic_DNA"/>
</dbReference>
<dbReference type="RefSeq" id="WP_003416829.1">
    <property type="nucleotide sequence ID" value="NZ_CP014566.1"/>
</dbReference>
<dbReference type="SMR" id="C1AGW8"/>
<dbReference type="GeneID" id="45427190"/>
<dbReference type="KEGG" id="mbt:JTY_3219"/>
<dbReference type="HOGENOM" id="CLU_037162_0_4_11"/>
<dbReference type="BRENDA" id="3.6.1.22">
    <property type="organism ID" value="3494"/>
</dbReference>
<dbReference type="GO" id="GO:0005829">
    <property type="term" value="C:cytosol"/>
    <property type="evidence" value="ECO:0007669"/>
    <property type="project" value="TreeGrafter"/>
</dbReference>
<dbReference type="GO" id="GO:0000287">
    <property type="term" value="F:magnesium ion binding"/>
    <property type="evidence" value="ECO:0007669"/>
    <property type="project" value="UniProtKB-UniRule"/>
</dbReference>
<dbReference type="GO" id="GO:0030145">
    <property type="term" value="F:manganese ion binding"/>
    <property type="evidence" value="ECO:0007669"/>
    <property type="project" value="UniProtKB-UniRule"/>
</dbReference>
<dbReference type="GO" id="GO:0000210">
    <property type="term" value="F:NAD+ diphosphatase activity"/>
    <property type="evidence" value="ECO:0007669"/>
    <property type="project" value="UniProtKB-UniRule"/>
</dbReference>
<dbReference type="GO" id="GO:0035529">
    <property type="term" value="F:NADH pyrophosphatase activity"/>
    <property type="evidence" value="ECO:0007669"/>
    <property type="project" value="TreeGrafter"/>
</dbReference>
<dbReference type="GO" id="GO:0110153">
    <property type="term" value="F:RNA NAD-cap (NMN-forming) hydrolase activity"/>
    <property type="evidence" value="ECO:0007669"/>
    <property type="project" value="RHEA"/>
</dbReference>
<dbReference type="GO" id="GO:0019677">
    <property type="term" value="P:NAD catabolic process"/>
    <property type="evidence" value="ECO:0007669"/>
    <property type="project" value="TreeGrafter"/>
</dbReference>
<dbReference type="GO" id="GO:0006734">
    <property type="term" value="P:NADH metabolic process"/>
    <property type="evidence" value="ECO:0007669"/>
    <property type="project" value="TreeGrafter"/>
</dbReference>
<dbReference type="GO" id="GO:0006742">
    <property type="term" value="P:NADP catabolic process"/>
    <property type="evidence" value="ECO:0007669"/>
    <property type="project" value="TreeGrafter"/>
</dbReference>
<dbReference type="CDD" id="cd03429">
    <property type="entry name" value="NUDIX_NADH_pyrophosphatase_Nudt13"/>
    <property type="match status" value="1"/>
</dbReference>
<dbReference type="FunFam" id="3.90.79.10:FF:000048">
    <property type="entry name" value="NADH pyrophosphatase"/>
    <property type="match status" value="1"/>
</dbReference>
<dbReference type="Gene3D" id="3.90.79.20">
    <property type="match status" value="1"/>
</dbReference>
<dbReference type="Gene3D" id="3.90.79.10">
    <property type="entry name" value="Nucleoside Triphosphate Pyrophosphohydrolase"/>
    <property type="match status" value="1"/>
</dbReference>
<dbReference type="HAMAP" id="MF_00297">
    <property type="entry name" value="Nudix_NudC"/>
    <property type="match status" value="1"/>
</dbReference>
<dbReference type="InterPro" id="IPR050241">
    <property type="entry name" value="NAD-cap_RNA_hydrolase_NudC"/>
</dbReference>
<dbReference type="InterPro" id="IPR015375">
    <property type="entry name" value="NADH_PPase-like_N"/>
</dbReference>
<dbReference type="InterPro" id="IPR049734">
    <property type="entry name" value="NudC-like_C"/>
</dbReference>
<dbReference type="InterPro" id="IPR015797">
    <property type="entry name" value="NUDIX_hydrolase-like_dom_sf"/>
</dbReference>
<dbReference type="InterPro" id="IPR020084">
    <property type="entry name" value="NUDIX_hydrolase_CS"/>
</dbReference>
<dbReference type="InterPro" id="IPR000086">
    <property type="entry name" value="NUDIX_hydrolase_dom"/>
</dbReference>
<dbReference type="InterPro" id="IPR022925">
    <property type="entry name" value="RNA_Hydrolase_NudC"/>
</dbReference>
<dbReference type="InterPro" id="IPR015376">
    <property type="entry name" value="Znr_NADH_PPase"/>
</dbReference>
<dbReference type="NCBIfam" id="NF001299">
    <property type="entry name" value="PRK00241.1"/>
    <property type="match status" value="1"/>
</dbReference>
<dbReference type="PANTHER" id="PTHR42904:SF6">
    <property type="entry name" value="NAD-CAPPED RNA HYDROLASE NUDT12"/>
    <property type="match status" value="1"/>
</dbReference>
<dbReference type="PANTHER" id="PTHR42904">
    <property type="entry name" value="NUDIX HYDROLASE, NUDC SUBFAMILY"/>
    <property type="match status" value="1"/>
</dbReference>
<dbReference type="Pfam" id="PF00293">
    <property type="entry name" value="NUDIX"/>
    <property type="match status" value="1"/>
</dbReference>
<dbReference type="Pfam" id="PF09296">
    <property type="entry name" value="NUDIX-like"/>
    <property type="match status" value="1"/>
</dbReference>
<dbReference type="Pfam" id="PF09297">
    <property type="entry name" value="Zn_ribbon_NUD"/>
    <property type="match status" value="1"/>
</dbReference>
<dbReference type="SUPFAM" id="SSF55811">
    <property type="entry name" value="Nudix"/>
    <property type="match status" value="1"/>
</dbReference>
<dbReference type="PROSITE" id="PS51462">
    <property type="entry name" value="NUDIX"/>
    <property type="match status" value="1"/>
</dbReference>
<dbReference type="PROSITE" id="PS00893">
    <property type="entry name" value="NUDIX_BOX"/>
    <property type="match status" value="1"/>
</dbReference>
<proteinExistence type="inferred from homology"/>
<sequence>MTNVSGVDFQLRSVPLLSRVGADRADRLRTDMEAAAAGWPGAALLRVDSRNRVLVANGRVLLGAAIELADKPPPEAVFLGRVEGGRHVWAVRAALQPIADPDIPAEAVDLRGLGRIMDDTSSQLVSSASALLNWHDNARFSALDGAPTKPARAGWSRVNPITGHEEFPRIDPAVICLVHDGADRAVLARQAAWPERMFSLLAGFVEAGESFEVCVAREIREEIGLTVRDVRYLGSQPWPFPRSLMVGFHALGDPDEEFSFSDGEIAEAAWFTRDEVRAALAAGDWSSASESKLLLPGSISIARVIIESWAACE</sequence>
<protein>
    <recommendedName>
        <fullName evidence="1">NAD-capped RNA hydrolase NudC</fullName>
        <shortName evidence="1">DeNADding enzyme NudC</shortName>
        <ecNumber evidence="1">3.6.1.-</ecNumber>
    </recommendedName>
    <alternativeName>
        <fullName evidence="1">NADH pyrophosphatase</fullName>
        <ecNumber evidence="1">3.6.1.22</ecNumber>
    </alternativeName>
</protein>
<evidence type="ECO:0000255" key="1">
    <source>
        <dbReference type="HAMAP-Rule" id="MF_00297"/>
    </source>
</evidence>